<protein>
    <recommendedName>
        <fullName>U3 small nucleolar RNA-associated protein 11</fullName>
        <shortName>U3 snoRNA-associated protein 11</shortName>
    </recommendedName>
    <alternativeName>
        <fullName>U three protein 11</fullName>
    </alternativeName>
</protein>
<proteinExistence type="inferred from homology"/>
<sequence length="250" mass="29735">MAKLVHDVQKKQHRERSQLTSRSRYGFLEKHKDYVKRAQDFHRKQSTLKVLREKAKERNPDEYYHAMHSRKTDAKGLLISSRHGDEEDESLSMDQVKLLKTQDSNYVRTLRQIELKKLEKGAKQLMFKSSGNHTIFVDSREKMNEFTPEKFFNTTSEMVNRSENRLTKDQLAQDISNNRNASSIMPKESLDKKKLKKFKQVKQHLQRETQLKQVQQRMDAQRELLKKGSKKKIVDSSGKISFKWKKQRKR</sequence>
<dbReference type="EMBL" id="ABSV01001463">
    <property type="protein sequence ID" value="EDZ70981.1"/>
    <property type="molecule type" value="Genomic_DNA"/>
</dbReference>
<dbReference type="EMDB" id="EMD-25441"/>
<dbReference type="EMDB" id="EMD-8859"/>
<dbReference type="SMR" id="B5VM59"/>
<dbReference type="Proteomes" id="UP000008988">
    <property type="component" value="Unassembled WGS sequence"/>
</dbReference>
<dbReference type="GO" id="GO:0005730">
    <property type="term" value="C:nucleolus"/>
    <property type="evidence" value="ECO:0007669"/>
    <property type="project" value="UniProtKB-SubCell"/>
</dbReference>
<dbReference type="GO" id="GO:0032040">
    <property type="term" value="C:small-subunit processome"/>
    <property type="evidence" value="ECO:0007669"/>
    <property type="project" value="InterPro"/>
</dbReference>
<dbReference type="GO" id="GO:0006364">
    <property type="term" value="P:rRNA processing"/>
    <property type="evidence" value="ECO:0007669"/>
    <property type="project" value="UniProtKB-KW"/>
</dbReference>
<dbReference type="InterPro" id="IPR007144">
    <property type="entry name" value="SSU_processome_Utp11"/>
</dbReference>
<dbReference type="PANTHER" id="PTHR12838">
    <property type="entry name" value="U3 SMALL NUCLEOLAR RNA-ASSOCIATED PROTEIN 11"/>
    <property type="match status" value="1"/>
</dbReference>
<dbReference type="PANTHER" id="PTHR12838:SF0">
    <property type="entry name" value="U3 SMALL NUCLEOLAR RNA-ASSOCIATED PROTEIN 11-RELATED"/>
    <property type="match status" value="1"/>
</dbReference>
<dbReference type="Pfam" id="PF03998">
    <property type="entry name" value="Utp11"/>
    <property type="match status" value="1"/>
</dbReference>
<dbReference type="PIRSF" id="PIRSF015952">
    <property type="entry name" value="U3snoRNP11"/>
    <property type="match status" value="1"/>
</dbReference>
<accession>B5VM59</accession>
<keyword id="KW-0539">Nucleus</keyword>
<keyword id="KW-0687">Ribonucleoprotein</keyword>
<keyword id="KW-0690">Ribosome biogenesis</keyword>
<keyword id="KW-0698">rRNA processing</keyword>
<organism>
    <name type="scientific">Saccharomyces cerevisiae (strain AWRI1631)</name>
    <name type="common">Baker's yeast</name>
    <dbReference type="NCBI Taxonomy" id="545124"/>
    <lineage>
        <taxon>Eukaryota</taxon>
        <taxon>Fungi</taxon>
        <taxon>Dikarya</taxon>
        <taxon>Ascomycota</taxon>
        <taxon>Saccharomycotina</taxon>
        <taxon>Saccharomycetes</taxon>
        <taxon>Saccharomycetales</taxon>
        <taxon>Saccharomycetaceae</taxon>
        <taxon>Saccharomyces</taxon>
    </lineage>
</organism>
<evidence type="ECO:0000250" key="1"/>
<evidence type="ECO:0000256" key="2">
    <source>
        <dbReference type="SAM" id="MobiDB-lite"/>
    </source>
</evidence>
<evidence type="ECO:0000305" key="3"/>
<gene>
    <name type="primary">UTP11</name>
    <name type="ORF">AWRI1631_111230</name>
</gene>
<feature type="chain" id="PRO_0000377654" description="U3 small nucleolar RNA-associated protein 11">
    <location>
        <begin position="1"/>
        <end position="250"/>
    </location>
</feature>
<feature type="region of interest" description="Disordered" evidence="2">
    <location>
        <begin position="1"/>
        <end position="23"/>
    </location>
</feature>
<feature type="region of interest" description="Disordered" evidence="2">
    <location>
        <begin position="219"/>
        <end position="250"/>
    </location>
</feature>
<feature type="compositionally biased region" description="Basic and acidic residues" evidence="2">
    <location>
        <begin position="1"/>
        <end position="10"/>
    </location>
</feature>
<name>UTP11_YEAS6</name>
<reference key="1">
    <citation type="journal article" date="2008" name="FEMS Yeast Res.">
        <title>Comparative genome analysis of a Saccharomyces cerevisiae wine strain.</title>
        <authorList>
            <person name="Borneman A.R."/>
            <person name="Forgan A.H."/>
            <person name="Pretorius I.S."/>
            <person name="Chambers P.J."/>
        </authorList>
    </citation>
    <scope>NUCLEOTIDE SEQUENCE [LARGE SCALE GENOMIC DNA]</scope>
    <source>
        <strain>AWRI1631</strain>
    </source>
</reference>
<comment type="function">
    <text evidence="1">Involved in nucleolar processing of pre-18S ribosomal RNA.</text>
</comment>
<comment type="subunit">
    <text evidence="1">Component of the ribosomal small subunit (SSU) processome composed of at least 40 protein subunits and snoRNA U3. Interacts with snoRNA U3. Interacts with EBP2, FAF1, MPP10, RPS16A and RRP14 (By similarity).</text>
</comment>
<comment type="subcellular location">
    <subcellularLocation>
        <location evidence="1">Nucleus</location>
        <location evidence="1">Nucleolus</location>
    </subcellularLocation>
</comment>
<comment type="similarity">
    <text evidence="3">Belongs to the UTP11 family.</text>
</comment>